<protein>
    <recommendedName>
        <fullName evidence="1">Ribose-5-phosphate isomerase A</fullName>
        <ecNumber evidence="1">5.3.1.6</ecNumber>
    </recommendedName>
    <alternativeName>
        <fullName evidence="1">Phosphoriboisomerase A</fullName>
        <shortName evidence="1">PRI</shortName>
    </alternativeName>
</protein>
<sequence length="219" mass="22895">MTQDELKKAVGWAALQYVQPGTIVGVGTGSTAAHFIDALGTMKGQIEGAVSSSDASTEKLKGLGIHVFDLNEVDSLGIYVDGADEINGHMQMIKGGGAALTREKIIASVAEKFICIADASKQVDILGKFPLPVEVIPMARSAVARQLVKLGGRPEYRQNVVTDNGNVILDVYGMEILDPIALENAINAIPGVVTVGLFANRGADVALIGTPDGVKTIVK</sequence>
<gene>
    <name evidence="1" type="primary">rpiA</name>
    <name type="ordered locus">SG2958</name>
</gene>
<keyword id="KW-0413">Isomerase</keyword>
<comment type="function">
    <text evidence="1">Catalyzes the reversible conversion of ribose-5-phosphate to ribulose 5-phosphate.</text>
</comment>
<comment type="catalytic activity">
    <reaction evidence="1">
        <text>aldehydo-D-ribose 5-phosphate = D-ribulose 5-phosphate</text>
        <dbReference type="Rhea" id="RHEA:14657"/>
        <dbReference type="ChEBI" id="CHEBI:58121"/>
        <dbReference type="ChEBI" id="CHEBI:58273"/>
        <dbReference type="EC" id="5.3.1.6"/>
    </reaction>
</comment>
<comment type="pathway">
    <text evidence="1">Carbohydrate degradation; pentose phosphate pathway; D-ribose 5-phosphate from D-ribulose 5-phosphate (non-oxidative stage): step 1/1.</text>
</comment>
<comment type="subunit">
    <text evidence="1">Homodimer.</text>
</comment>
<comment type="similarity">
    <text evidence="1">Belongs to the ribose 5-phosphate isomerase family.</text>
</comment>
<organism>
    <name type="scientific">Salmonella gallinarum (strain 287/91 / NCTC 13346)</name>
    <dbReference type="NCBI Taxonomy" id="550538"/>
    <lineage>
        <taxon>Bacteria</taxon>
        <taxon>Pseudomonadati</taxon>
        <taxon>Pseudomonadota</taxon>
        <taxon>Gammaproteobacteria</taxon>
        <taxon>Enterobacterales</taxon>
        <taxon>Enterobacteriaceae</taxon>
        <taxon>Salmonella</taxon>
    </lineage>
</organism>
<accession>B5RE24</accession>
<evidence type="ECO:0000255" key="1">
    <source>
        <dbReference type="HAMAP-Rule" id="MF_00170"/>
    </source>
</evidence>
<dbReference type="EC" id="5.3.1.6" evidence="1"/>
<dbReference type="EMBL" id="AM933173">
    <property type="protein sequence ID" value="CAR38763.1"/>
    <property type="molecule type" value="Genomic_DNA"/>
</dbReference>
<dbReference type="RefSeq" id="WP_000189741.1">
    <property type="nucleotide sequence ID" value="NC_011274.1"/>
</dbReference>
<dbReference type="SMR" id="B5RE24"/>
<dbReference type="KEGG" id="seg:SG2958"/>
<dbReference type="HOGENOM" id="CLU_056590_1_1_6"/>
<dbReference type="UniPathway" id="UPA00115">
    <property type="reaction ID" value="UER00412"/>
</dbReference>
<dbReference type="Proteomes" id="UP000008321">
    <property type="component" value="Chromosome"/>
</dbReference>
<dbReference type="GO" id="GO:0005829">
    <property type="term" value="C:cytosol"/>
    <property type="evidence" value="ECO:0007669"/>
    <property type="project" value="TreeGrafter"/>
</dbReference>
<dbReference type="GO" id="GO:0004751">
    <property type="term" value="F:ribose-5-phosphate isomerase activity"/>
    <property type="evidence" value="ECO:0007669"/>
    <property type="project" value="UniProtKB-UniRule"/>
</dbReference>
<dbReference type="GO" id="GO:0006014">
    <property type="term" value="P:D-ribose metabolic process"/>
    <property type="evidence" value="ECO:0007669"/>
    <property type="project" value="TreeGrafter"/>
</dbReference>
<dbReference type="GO" id="GO:0009052">
    <property type="term" value="P:pentose-phosphate shunt, non-oxidative branch"/>
    <property type="evidence" value="ECO:0007669"/>
    <property type="project" value="UniProtKB-UniRule"/>
</dbReference>
<dbReference type="CDD" id="cd01398">
    <property type="entry name" value="RPI_A"/>
    <property type="match status" value="1"/>
</dbReference>
<dbReference type="FunFam" id="3.30.70.260:FF:000004">
    <property type="entry name" value="Ribose-5-phosphate isomerase A"/>
    <property type="match status" value="1"/>
</dbReference>
<dbReference type="FunFam" id="3.40.50.1360:FF:000001">
    <property type="entry name" value="Ribose-5-phosphate isomerase A"/>
    <property type="match status" value="1"/>
</dbReference>
<dbReference type="Gene3D" id="3.30.70.260">
    <property type="match status" value="1"/>
</dbReference>
<dbReference type="Gene3D" id="3.40.50.1360">
    <property type="match status" value="1"/>
</dbReference>
<dbReference type="HAMAP" id="MF_00170">
    <property type="entry name" value="Rib_5P_isom_A"/>
    <property type="match status" value="1"/>
</dbReference>
<dbReference type="InterPro" id="IPR037171">
    <property type="entry name" value="NagB/RpiA_transferase-like"/>
</dbReference>
<dbReference type="InterPro" id="IPR020672">
    <property type="entry name" value="Ribose5P_isomerase_typA_subgr"/>
</dbReference>
<dbReference type="InterPro" id="IPR004788">
    <property type="entry name" value="Ribose5P_isomerase_type_A"/>
</dbReference>
<dbReference type="NCBIfam" id="NF001924">
    <property type="entry name" value="PRK00702.1"/>
    <property type="match status" value="1"/>
</dbReference>
<dbReference type="NCBIfam" id="TIGR00021">
    <property type="entry name" value="rpiA"/>
    <property type="match status" value="1"/>
</dbReference>
<dbReference type="PANTHER" id="PTHR11934">
    <property type="entry name" value="RIBOSE-5-PHOSPHATE ISOMERASE"/>
    <property type="match status" value="1"/>
</dbReference>
<dbReference type="PANTHER" id="PTHR11934:SF0">
    <property type="entry name" value="RIBOSE-5-PHOSPHATE ISOMERASE"/>
    <property type="match status" value="1"/>
</dbReference>
<dbReference type="Pfam" id="PF06026">
    <property type="entry name" value="Rib_5-P_isom_A"/>
    <property type="match status" value="1"/>
</dbReference>
<dbReference type="SUPFAM" id="SSF75445">
    <property type="entry name" value="D-ribose-5-phosphate isomerase (RpiA), lid domain"/>
    <property type="match status" value="1"/>
</dbReference>
<dbReference type="SUPFAM" id="SSF100950">
    <property type="entry name" value="NagB/RpiA/CoA transferase-like"/>
    <property type="match status" value="1"/>
</dbReference>
<reference key="1">
    <citation type="journal article" date="2008" name="Genome Res.">
        <title>Comparative genome analysis of Salmonella enteritidis PT4 and Salmonella gallinarum 287/91 provides insights into evolutionary and host adaptation pathways.</title>
        <authorList>
            <person name="Thomson N.R."/>
            <person name="Clayton D.J."/>
            <person name="Windhorst D."/>
            <person name="Vernikos G."/>
            <person name="Davidson S."/>
            <person name="Churcher C."/>
            <person name="Quail M.A."/>
            <person name="Stevens M."/>
            <person name="Jones M.A."/>
            <person name="Watson M."/>
            <person name="Barron A."/>
            <person name="Layton A."/>
            <person name="Pickard D."/>
            <person name="Kingsley R.A."/>
            <person name="Bignell A."/>
            <person name="Clark L."/>
            <person name="Harris B."/>
            <person name="Ormond D."/>
            <person name="Abdellah Z."/>
            <person name="Brooks K."/>
            <person name="Cherevach I."/>
            <person name="Chillingworth T."/>
            <person name="Woodward J."/>
            <person name="Norberczak H."/>
            <person name="Lord A."/>
            <person name="Arrowsmith C."/>
            <person name="Jagels K."/>
            <person name="Moule S."/>
            <person name="Mungall K."/>
            <person name="Saunders M."/>
            <person name="Whitehead S."/>
            <person name="Chabalgoity J.A."/>
            <person name="Maskell D."/>
            <person name="Humphreys T."/>
            <person name="Roberts M."/>
            <person name="Barrow P.A."/>
            <person name="Dougan G."/>
            <person name="Parkhill J."/>
        </authorList>
    </citation>
    <scope>NUCLEOTIDE SEQUENCE [LARGE SCALE GENOMIC DNA]</scope>
    <source>
        <strain>287/91 / NCTC 13346</strain>
    </source>
</reference>
<feature type="chain" id="PRO_1000097691" description="Ribose-5-phosphate isomerase A">
    <location>
        <begin position="1"/>
        <end position="219"/>
    </location>
</feature>
<feature type="active site" description="Proton acceptor" evidence="1">
    <location>
        <position position="103"/>
    </location>
</feature>
<feature type="binding site" evidence="1">
    <location>
        <begin position="28"/>
        <end position="31"/>
    </location>
    <ligand>
        <name>substrate</name>
    </ligand>
</feature>
<feature type="binding site" evidence="1">
    <location>
        <begin position="81"/>
        <end position="84"/>
    </location>
    <ligand>
        <name>substrate</name>
    </ligand>
</feature>
<feature type="binding site" evidence="1">
    <location>
        <begin position="94"/>
        <end position="97"/>
    </location>
    <ligand>
        <name>substrate</name>
    </ligand>
</feature>
<feature type="binding site" evidence="1">
    <location>
        <position position="121"/>
    </location>
    <ligand>
        <name>substrate</name>
    </ligand>
</feature>
<proteinExistence type="inferred from homology"/>
<name>RPIA_SALG2</name>